<evidence type="ECO:0000255" key="1">
    <source>
        <dbReference type="HAMAP-Rule" id="MF_00472"/>
    </source>
</evidence>
<reference key="1">
    <citation type="journal article" date="2003" name="J. Bacteriol.">
        <title>Complete genome sequence of the ammonia-oxidizing bacterium and obligate chemolithoautotroph Nitrosomonas europaea.</title>
        <authorList>
            <person name="Chain P."/>
            <person name="Lamerdin J.E."/>
            <person name="Larimer F.W."/>
            <person name="Regala W."/>
            <person name="Lao V."/>
            <person name="Land M.L."/>
            <person name="Hauser L."/>
            <person name="Hooper A.B."/>
            <person name="Klotz M.G."/>
            <person name="Norton J."/>
            <person name="Sayavedra-Soto L.A."/>
            <person name="Arciero D.M."/>
            <person name="Hommes N.G."/>
            <person name="Whittaker M.M."/>
            <person name="Arp D.J."/>
        </authorList>
    </citation>
    <scope>NUCLEOTIDE SEQUENCE [LARGE SCALE GENOMIC DNA]</scope>
    <source>
        <strain>ATCC 19718 / CIP 103999 / KCTC 2705 / NBRC 14298</strain>
    </source>
</reference>
<gene>
    <name evidence="1" type="primary">ubiG</name>
    <name type="ordered locus">NE2547</name>
</gene>
<keyword id="KW-0489">Methyltransferase</keyword>
<keyword id="KW-1185">Reference proteome</keyword>
<keyword id="KW-0949">S-adenosyl-L-methionine</keyword>
<keyword id="KW-0808">Transferase</keyword>
<keyword id="KW-0831">Ubiquinone biosynthesis</keyword>
<feature type="chain" id="PRO_0000193387" description="Ubiquinone biosynthesis O-methyltransferase">
    <location>
        <begin position="1"/>
        <end position="235"/>
    </location>
</feature>
<feature type="binding site" evidence="1">
    <location>
        <position position="40"/>
    </location>
    <ligand>
        <name>S-adenosyl-L-methionine</name>
        <dbReference type="ChEBI" id="CHEBI:59789"/>
    </ligand>
</feature>
<feature type="binding site" evidence="1">
    <location>
        <position position="60"/>
    </location>
    <ligand>
        <name>S-adenosyl-L-methionine</name>
        <dbReference type="ChEBI" id="CHEBI:59789"/>
    </ligand>
</feature>
<feature type="binding site" evidence="1">
    <location>
        <position position="81"/>
    </location>
    <ligand>
        <name>S-adenosyl-L-methionine</name>
        <dbReference type="ChEBI" id="CHEBI:59789"/>
    </ligand>
</feature>
<feature type="binding site" evidence="1">
    <location>
        <position position="125"/>
    </location>
    <ligand>
        <name>S-adenosyl-L-methionine</name>
        <dbReference type="ChEBI" id="CHEBI:59789"/>
    </ligand>
</feature>
<comment type="function">
    <text evidence="1">O-methyltransferase that catalyzes the 2 O-methylation steps in the ubiquinone biosynthetic pathway.</text>
</comment>
<comment type="catalytic activity">
    <reaction evidence="1">
        <text>a 3-demethylubiquinol + S-adenosyl-L-methionine = a ubiquinol + S-adenosyl-L-homocysteine + H(+)</text>
        <dbReference type="Rhea" id="RHEA:44380"/>
        <dbReference type="Rhea" id="RHEA-COMP:9566"/>
        <dbReference type="Rhea" id="RHEA-COMP:10914"/>
        <dbReference type="ChEBI" id="CHEBI:15378"/>
        <dbReference type="ChEBI" id="CHEBI:17976"/>
        <dbReference type="ChEBI" id="CHEBI:57856"/>
        <dbReference type="ChEBI" id="CHEBI:59789"/>
        <dbReference type="ChEBI" id="CHEBI:84422"/>
        <dbReference type="EC" id="2.1.1.64"/>
    </reaction>
</comment>
<comment type="catalytic activity">
    <reaction evidence="1">
        <text>a 3-(all-trans-polyprenyl)benzene-1,2-diol + S-adenosyl-L-methionine = a 2-methoxy-6-(all-trans-polyprenyl)phenol + S-adenosyl-L-homocysteine + H(+)</text>
        <dbReference type="Rhea" id="RHEA:31411"/>
        <dbReference type="Rhea" id="RHEA-COMP:9550"/>
        <dbReference type="Rhea" id="RHEA-COMP:9551"/>
        <dbReference type="ChEBI" id="CHEBI:15378"/>
        <dbReference type="ChEBI" id="CHEBI:57856"/>
        <dbReference type="ChEBI" id="CHEBI:59789"/>
        <dbReference type="ChEBI" id="CHEBI:62729"/>
        <dbReference type="ChEBI" id="CHEBI:62731"/>
        <dbReference type="EC" id="2.1.1.222"/>
    </reaction>
</comment>
<comment type="pathway">
    <text evidence="1">Cofactor biosynthesis; ubiquinone biosynthesis.</text>
</comment>
<comment type="similarity">
    <text evidence="1">Belongs to the methyltransferase superfamily. UbiG/COQ3 family.</text>
</comment>
<sequence>MDNDGINADPMELEKFSQLAHHWWDPNSEFKPLHEINPLRLNYIDEIIGGLSEKTVIDVGCGGGILSESMAARGASVTGIDLSDKALKVAKLHLLESGNQVDYRKITVEALATERPRYYDVVTCMEMLEHVPDPASVIQSCARLVKSGGWVFFSTLNRNPKSYLYAIIGAEYILRLLPRGTHEYAKFIKPSELAHMARSAGLMESGIVGMTYNPITKVYALEADTSVNYIMAFRA</sequence>
<organism>
    <name type="scientific">Nitrosomonas europaea (strain ATCC 19718 / CIP 103999 / KCTC 2705 / NBRC 14298)</name>
    <dbReference type="NCBI Taxonomy" id="228410"/>
    <lineage>
        <taxon>Bacteria</taxon>
        <taxon>Pseudomonadati</taxon>
        <taxon>Pseudomonadota</taxon>
        <taxon>Betaproteobacteria</taxon>
        <taxon>Nitrosomonadales</taxon>
        <taxon>Nitrosomonadaceae</taxon>
        <taxon>Nitrosomonas</taxon>
    </lineage>
</organism>
<dbReference type="EC" id="2.1.1.222" evidence="1"/>
<dbReference type="EC" id="2.1.1.64" evidence="1"/>
<dbReference type="EMBL" id="AL954747">
    <property type="protein sequence ID" value="CAD86459.1"/>
    <property type="molecule type" value="Genomic_DNA"/>
</dbReference>
<dbReference type="RefSeq" id="WP_011113000.1">
    <property type="nucleotide sequence ID" value="NC_004757.1"/>
</dbReference>
<dbReference type="SMR" id="Q81ZZ2"/>
<dbReference type="STRING" id="228410.NE2547"/>
<dbReference type="GeneID" id="87105675"/>
<dbReference type="KEGG" id="neu:NE2547"/>
<dbReference type="eggNOG" id="COG2227">
    <property type="taxonomic scope" value="Bacteria"/>
</dbReference>
<dbReference type="HOGENOM" id="CLU_042432_5_0_4"/>
<dbReference type="OrthoDB" id="9801538at2"/>
<dbReference type="PhylomeDB" id="Q81ZZ2"/>
<dbReference type="UniPathway" id="UPA00232"/>
<dbReference type="Proteomes" id="UP000001416">
    <property type="component" value="Chromosome"/>
</dbReference>
<dbReference type="GO" id="GO:0102208">
    <property type="term" value="F:2-polyprenyl-6-hydroxyphenol methylase activity"/>
    <property type="evidence" value="ECO:0007669"/>
    <property type="project" value="UniProtKB-EC"/>
</dbReference>
<dbReference type="GO" id="GO:0061542">
    <property type="term" value="F:3-demethylubiquinol 3-O-methyltransferase activity"/>
    <property type="evidence" value="ECO:0007669"/>
    <property type="project" value="UniProtKB-UniRule"/>
</dbReference>
<dbReference type="GO" id="GO:0010420">
    <property type="term" value="F:polyprenyldihydroxybenzoate methyltransferase activity"/>
    <property type="evidence" value="ECO:0007669"/>
    <property type="project" value="InterPro"/>
</dbReference>
<dbReference type="GO" id="GO:0032259">
    <property type="term" value="P:methylation"/>
    <property type="evidence" value="ECO:0007669"/>
    <property type="project" value="UniProtKB-KW"/>
</dbReference>
<dbReference type="CDD" id="cd02440">
    <property type="entry name" value="AdoMet_MTases"/>
    <property type="match status" value="1"/>
</dbReference>
<dbReference type="FunFam" id="3.40.50.150:FF:000028">
    <property type="entry name" value="Ubiquinone biosynthesis O-methyltransferase"/>
    <property type="match status" value="1"/>
</dbReference>
<dbReference type="Gene3D" id="3.40.50.150">
    <property type="entry name" value="Vaccinia Virus protein VP39"/>
    <property type="match status" value="1"/>
</dbReference>
<dbReference type="HAMAP" id="MF_00472">
    <property type="entry name" value="UbiG"/>
    <property type="match status" value="1"/>
</dbReference>
<dbReference type="InterPro" id="IPR029063">
    <property type="entry name" value="SAM-dependent_MTases_sf"/>
</dbReference>
<dbReference type="InterPro" id="IPR010233">
    <property type="entry name" value="UbiG_MeTrfase"/>
</dbReference>
<dbReference type="NCBIfam" id="TIGR01983">
    <property type="entry name" value="UbiG"/>
    <property type="match status" value="1"/>
</dbReference>
<dbReference type="PANTHER" id="PTHR43464">
    <property type="entry name" value="METHYLTRANSFERASE"/>
    <property type="match status" value="1"/>
</dbReference>
<dbReference type="PANTHER" id="PTHR43464:SF19">
    <property type="entry name" value="UBIQUINONE BIOSYNTHESIS O-METHYLTRANSFERASE, MITOCHONDRIAL"/>
    <property type="match status" value="1"/>
</dbReference>
<dbReference type="Pfam" id="PF13489">
    <property type="entry name" value="Methyltransf_23"/>
    <property type="match status" value="1"/>
</dbReference>
<dbReference type="SUPFAM" id="SSF53335">
    <property type="entry name" value="S-adenosyl-L-methionine-dependent methyltransferases"/>
    <property type="match status" value="1"/>
</dbReference>
<name>UBIG_NITEU</name>
<proteinExistence type="inferred from homology"/>
<protein>
    <recommendedName>
        <fullName evidence="1">Ubiquinone biosynthesis O-methyltransferase</fullName>
    </recommendedName>
    <alternativeName>
        <fullName evidence="1">2-polyprenyl-6-hydroxyphenol methylase</fullName>
        <ecNumber evidence="1">2.1.1.222</ecNumber>
    </alternativeName>
    <alternativeName>
        <fullName evidence="1">3-demethylubiquinone 3-O-methyltransferase</fullName>
        <ecNumber evidence="1">2.1.1.64</ecNumber>
    </alternativeName>
</protein>
<accession>Q81ZZ2</accession>